<keyword id="KW-0067">ATP-binding</keyword>
<keyword id="KW-0963">Cytoplasm</keyword>
<keyword id="KW-0436">Ligase</keyword>
<keyword id="KW-0547">Nucleotide-binding</keyword>
<keyword id="KW-0658">Purine biosynthesis</keyword>
<reference key="1">
    <citation type="journal article" date="2009" name="J. Bacteriol.">
        <title>Genome sequence of Azotobacter vinelandii, an obligate aerobe specialized to support diverse anaerobic metabolic processes.</title>
        <authorList>
            <person name="Setubal J.C."/>
            <person name="Dos Santos P."/>
            <person name="Goldman B.S."/>
            <person name="Ertesvaag H."/>
            <person name="Espin G."/>
            <person name="Rubio L.M."/>
            <person name="Valla S."/>
            <person name="Almeida N.F."/>
            <person name="Balasubramanian D."/>
            <person name="Cromes L."/>
            <person name="Curatti L."/>
            <person name="Du Z."/>
            <person name="Godsy E."/>
            <person name="Goodner B."/>
            <person name="Hellner-Burris K."/>
            <person name="Hernandez J.A."/>
            <person name="Houmiel K."/>
            <person name="Imperial J."/>
            <person name="Kennedy C."/>
            <person name="Larson T.J."/>
            <person name="Latreille P."/>
            <person name="Ligon L.S."/>
            <person name="Lu J."/>
            <person name="Maerk M."/>
            <person name="Miller N.M."/>
            <person name="Norton S."/>
            <person name="O'Carroll I.P."/>
            <person name="Paulsen I."/>
            <person name="Raulfs E.C."/>
            <person name="Roemer R."/>
            <person name="Rosser J."/>
            <person name="Segura D."/>
            <person name="Slater S."/>
            <person name="Stricklin S.L."/>
            <person name="Studholme D.J."/>
            <person name="Sun J."/>
            <person name="Viana C.J."/>
            <person name="Wallin E."/>
            <person name="Wang B."/>
            <person name="Wheeler C."/>
            <person name="Zhu H."/>
            <person name="Dean D.R."/>
            <person name="Dixon R."/>
            <person name="Wood D."/>
        </authorList>
    </citation>
    <scope>NUCLEOTIDE SEQUENCE [LARGE SCALE GENOMIC DNA]</scope>
    <source>
        <strain>DJ / ATCC BAA-1303</strain>
    </source>
</reference>
<organism>
    <name type="scientific">Azotobacter vinelandii (strain DJ / ATCC BAA-1303)</name>
    <dbReference type="NCBI Taxonomy" id="322710"/>
    <lineage>
        <taxon>Bacteria</taxon>
        <taxon>Pseudomonadati</taxon>
        <taxon>Pseudomonadota</taxon>
        <taxon>Gammaproteobacteria</taxon>
        <taxon>Pseudomonadales</taxon>
        <taxon>Pseudomonadaceae</taxon>
        <taxon>Azotobacter</taxon>
    </lineage>
</organism>
<dbReference type="EC" id="6.3.3.1" evidence="1"/>
<dbReference type="EMBL" id="CP001157">
    <property type="protein sequence ID" value="ACO79835.1"/>
    <property type="molecule type" value="Genomic_DNA"/>
</dbReference>
<dbReference type="RefSeq" id="WP_012702210.1">
    <property type="nucleotide sequence ID" value="NC_012560.1"/>
</dbReference>
<dbReference type="SMR" id="C1DRW0"/>
<dbReference type="STRING" id="322710.Avin_36890"/>
<dbReference type="EnsemblBacteria" id="ACO79835">
    <property type="protein sequence ID" value="ACO79835"/>
    <property type="gene ID" value="Avin_36890"/>
</dbReference>
<dbReference type="GeneID" id="88186672"/>
<dbReference type="KEGG" id="avn:Avin_36890"/>
<dbReference type="eggNOG" id="COG0150">
    <property type="taxonomic scope" value="Bacteria"/>
</dbReference>
<dbReference type="HOGENOM" id="CLU_047116_0_0_6"/>
<dbReference type="OrthoDB" id="9777881at2"/>
<dbReference type="UniPathway" id="UPA00074">
    <property type="reaction ID" value="UER00129"/>
</dbReference>
<dbReference type="Proteomes" id="UP000002424">
    <property type="component" value="Chromosome"/>
</dbReference>
<dbReference type="GO" id="GO:0005829">
    <property type="term" value="C:cytosol"/>
    <property type="evidence" value="ECO:0007669"/>
    <property type="project" value="TreeGrafter"/>
</dbReference>
<dbReference type="GO" id="GO:0005524">
    <property type="term" value="F:ATP binding"/>
    <property type="evidence" value="ECO:0007669"/>
    <property type="project" value="UniProtKB-KW"/>
</dbReference>
<dbReference type="GO" id="GO:0004637">
    <property type="term" value="F:phosphoribosylamine-glycine ligase activity"/>
    <property type="evidence" value="ECO:0007669"/>
    <property type="project" value="TreeGrafter"/>
</dbReference>
<dbReference type="GO" id="GO:0004641">
    <property type="term" value="F:phosphoribosylformylglycinamidine cyclo-ligase activity"/>
    <property type="evidence" value="ECO:0007669"/>
    <property type="project" value="UniProtKB-UniRule"/>
</dbReference>
<dbReference type="GO" id="GO:0006189">
    <property type="term" value="P:'de novo' IMP biosynthetic process"/>
    <property type="evidence" value="ECO:0007669"/>
    <property type="project" value="UniProtKB-UniRule"/>
</dbReference>
<dbReference type="GO" id="GO:0046084">
    <property type="term" value="P:adenine biosynthetic process"/>
    <property type="evidence" value="ECO:0007669"/>
    <property type="project" value="TreeGrafter"/>
</dbReference>
<dbReference type="CDD" id="cd02196">
    <property type="entry name" value="PurM"/>
    <property type="match status" value="1"/>
</dbReference>
<dbReference type="FunFam" id="3.30.1330.10:FF:000001">
    <property type="entry name" value="Phosphoribosylformylglycinamidine cyclo-ligase"/>
    <property type="match status" value="1"/>
</dbReference>
<dbReference type="FunFam" id="3.90.650.10:FF:000001">
    <property type="entry name" value="Phosphoribosylformylglycinamidine cyclo-ligase"/>
    <property type="match status" value="1"/>
</dbReference>
<dbReference type="Gene3D" id="3.90.650.10">
    <property type="entry name" value="PurM-like C-terminal domain"/>
    <property type="match status" value="1"/>
</dbReference>
<dbReference type="Gene3D" id="3.30.1330.10">
    <property type="entry name" value="PurM-like, N-terminal domain"/>
    <property type="match status" value="1"/>
</dbReference>
<dbReference type="HAMAP" id="MF_00741">
    <property type="entry name" value="AIRS"/>
    <property type="match status" value="1"/>
</dbReference>
<dbReference type="InterPro" id="IPR010918">
    <property type="entry name" value="PurM-like_C_dom"/>
</dbReference>
<dbReference type="InterPro" id="IPR036676">
    <property type="entry name" value="PurM-like_C_sf"/>
</dbReference>
<dbReference type="InterPro" id="IPR016188">
    <property type="entry name" value="PurM-like_N"/>
</dbReference>
<dbReference type="InterPro" id="IPR036921">
    <property type="entry name" value="PurM-like_N_sf"/>
</dbReference>
<dbReference type="InterPro" id="IPR004733">
    <property type="entry name" value="PurM_cligase"/>
</dbReference>
<dbReference type="NCBIfam" id="TIGR00878">
    <property type="entry name" value="purM"/>
    <property type="match status" value="1"/>
</dbReference>
<dbReference type="PANTHER" id="PTHR10520:SF12">
    <property type="entry name" value="TRIFUNCTIONAL PURINE BIOSYNTHETIC PROTEIN ADENOSINE-3"/>
    <property type="match status" value="1"/>
</dbReference>
<dbReference type="PANTHER" id="PTHR10520">
    <property type="entry name" value="TRIFUNCTIONAL PURINE BIOSYNTHETIC PROTEIN ADENOSINE-3-RELATED"/>
    <property type="match status" value="1"/>
</dbReference>
<dbReference type="Pfam" id="PF00586">
    <property type="entry name" value="AIRS"/>
    <property type="match status" value="1"/>
</dbReference>
<dbReference type="Pfam" id="PF02769">
    <property type="entry name" value="AIRS_C"/>
    <property type="match status" value="1"/>
</dbReference>
<dbReference type="SUPFAM" id="SSF56042">
    <property type="entry name" value="PurM C-terminal domain-like"/>
    <property type="match status" value="1"/>
</dbReference>
<dbReference type="SUPFAM" id="SSF55326">
    <property type="entry name" value="PurM N-terminal domain-like"/>
    <property type="match status" value="1"/>
</dbReference>
<protein>
    <recommendedName>
        <fullName evidence="1">Phosphoribosylformylglycinamidine cyclo-ligase</fullName>
        <ecNumber evidence="1">6.3.3.1</ecNumber>
    </recommendedName>
    <alternativeName>
        <fullName evidence="1">AIR synthase</fullName>
    </alternativeName>
    <alternativeName>
        <fullName evidence="1">AIRS</fullName>
    </alternativeName>
    <alternativeName>
        <fullName evidence="1">Phosphoribosyl-aminoimidazole synthetase</fullName>
    </alternativeName>
</protein>
<evidence type="ECO:0000255" key="1">
    <source>
        <dbReference type="HAMAP-Rule" id="MF_00741"/>
    </source>
</evidence>
<gene>
    <name evidence="1" type="primary">purM</name>
    <name type="ordered locus">Avin_36890</name>
</gene>
<comment type="catalytic activity">
    <reaction evidence="1">
        <text>2-formamido-N(1)-(5-O-phospho-beta-D-ribosyl)acetamidine + ATP = 5-amino-1-(5-phospho-beta-D-ribosyl)imidazole + ADP + phosphate + H(+)</text>
        <dbReference type="Rhea" id="RHEA:23032"/>
        <dbReference type="ChEBI" id="CHEBI:15378"/>
        <dbReference type="ChEBI" id="CHEBI:30616"/>
        <dbReference type="ChEBI" id="CHEBI:43474"/>
        <dbReference type="ChEBI" id="CHEBI:137981"/>
        <dbReference type="ChEBI" id="CHEBI:147287"/>
        <dbReference type="ChEBI" id="CHEBI:456216"/>
        <dbReference type="EC" id="6.3.3.1"/>
    </reaction>
</comment>
<comment type="pathway">
    <text evidence="1">Purine metabolism; IMP biosynthesis via de novo pathway; 5-amino-1-(5-phospho-D-ribosyl)imidazole from N(2)-formyl-N(1)-(5-phospho-D-ribosyl)glycinamide: step 2/2.</text>
</comment>
<comment type="subcellular location">
    <subcellularLocation>
        <location evidence="1">Cytoplasm</location>
    </subcellularLocation>
</comment>
<comment type="similarity">
    <text evidence="1">Belongs to the AIR synthase family.</text>
</comment>
<proteinExistence type="inferred from homology"/>
<sequence>MSKQPSLSYKDAGVDIDAGEALVERIKGVARRTARPEVMGGLGGFGALCEIPAGYRQPVLVSGTDGVGTKLRLAMNLGKHDSIGIDLVAMCVNDLVVCGAEPLFFLDYYATGKLNVDVAARVVAGIGEGCEMAGCALVGGETAEMPGMYEGEDYDLAGFCVGVVEKSEIIDGAKVAAGDALIALPSSGPHSNGYSLIRKILELSGTDVAGATLDGKPLADLLMAPTRIYVKPLLKLIRETGAVKAMAHITGGGLTENIPRVLPQGTRAVIDVASWTRPAVFDWLQEKGNVDEREMHRVLNCGVGMVVCVARDKVEQALAVLRAAGEQPWLIGDIAAGDGAERVQLHNLKAH</sequence>
<feature type="chain" id="PRO_1000212816" description="Phosphoribosylformylglycinamidine cyclo-ligase">
    <location>
        <begin position="1"/>
        <end position="351"/>
    </location>
</feature>
<accession>C1DRW0</accession>
<name>PUR5_AZOVD</name>